<proteinExistence type="inferred from homology"/>
<name>SECA2_STRSV</name>
<evidence type="ECO:0000255" key="1">
    <source>
        <dbReference type="HAMAP-Rule" id="MF_01382"/>
    </source>
</evidence>
<organism>
    <name type="scientific">Streptococcus sanguinis (strain SK36)</name>
    <dbReference type="NCBI Taxonomy" id="388919"/>
    <lineage>
        <taxon>Bacteria</taxon>
        <taxon>Bacillati</taxon>
        <taxon>Bacillota</taxon>
        <taxon>Bacilli</taxon>
        <taxon>Lactobacillales</taxon>
        <taxon>Streptococcaceae</taxon>
        <taxon>Streptococcus</taxon>
    </lineage>
</organism>
<accession>A3CM59</accession>
<sequence length="793" mass="90638">MIKNHFQIQRLKKILAKVKSFESEMAGLTDAELRKKTQEFKERLAAGETLDDLLPEAYAVVREADKRVLGMFPYDVQVMGAIVLHEGNVAEMATGEGKTLTATMPLYLNALSGQGAMLVTTNTYLALRDAQEMGQVYRFLGLTIEAAVVADETENLTPKQKRLIYQADIVYTTNSALGFDYLIENLAENKDSQYLSPFNYVIIDEIDSILLDSAQVPLVISGAPRVQSNFYSIMDTFITTLKEEEDYHYDDEKNEVWLTSKGILAAESFLDLEHLFSKENQELVRHLNLALRAHKLYKKDKDYVVRQGDKEAEVVLLDRATGRLLEMTRLQGGQHQAIEAKEHVKLTEETRAMASITYQNLFRLFRKISGMTGTGKVVESEFMETYSMSVIKIPTNQPVIRQDLPDQLYQTLPEKVFASLDEVKHYHAQGNPLLIFTGSVEMSEIYSSLLLREGIAHNLLNANNAAREAQIIAESGQKGAVTVATSMAGRGTDIKLGPGVADLGGLVVIGTERMENQRIDLQIRGRSGRQGDPGISKFFISLEDDLLRKWGPDWLKKLYKDYSTEEVQQHPVQLGQRRFRRLVAKAQRASESSAKMSRRMTLEYAQCMKIQREITYAERNRLIQAEERIDEEISRVLSQVIHQAAYEQSYETRADLYRFILDHFSYHAERIPYDFDIYSPEKIAELLQDIAEQELQAKKAYLKSDKLFTHFQRVSVLKAIDENWVEQVDYLQQLKTALSGQHFSMKNPLVEYYQEAYDGFEYMKERMKQQIVKNLLMSELALNPKGEVIMYFP</sequence>
<keyword id="KW-0067">ATP-binding</keyword>
<keyword id="KW-1003">Cell membrane</keyword>
<keyword id="KW-0963">Cytoplasm</keyword>
<keyword id="KW-0472">Membrane</keyword>
<keyword id="KW-0547">Nucleotide-binding</keyword>
<keyword id="KW-0653">Protein transport</keyword>
<keyword id="KW-1185">Reference proteome</keyword>
<keyword id="KW-1278">Translocase</keyword>
<keyword id="KW-0811">Translocation</keyword>
<keyword id="KW-0813">Transport</keyword>
<reference key="1">
    <citation type="journal article" date="2007" name="J. Bacteriol.">
        <title>Genome of the opportunistic pathogen Streptococcus sanguinis.</title>
        <authorList>
            <person name="Xu P."/>
            <person name="Alves J.M."/>
            <person name="Kitten T."/>
            <person name="Brown A."/>
            <person name="Chen Z."/>
            <person name="Ozaki L.S."/>
            <person name="Manque P."/>
            <person name="Ge X."/>
            <person name="Serrano M.G."/>
            <person name="Puiu D."/>
            <person name="Hendricks S."/>
            <person name="Wang Y."/>
            <person name="Chaplin M.D."/>
            <person name="Akan D."/>
            <person name="Paik S."/>
            <person name="Peterson D.L."/>
            <person name="Macrina F.L."/>
            <person name="Buck G.A."/>
        </authorList>
    </citation>
    <scope>NUCLEOTIDE SEQUENCE [LARGE SCALE GENOMIC DNA]</scope>
    <source>
        <strain>SK36</strain>
    </source>
</reference>
<comment type="function">
    <text evidence="1">Part of the Sec protein translocase complex. Interacts with the SecYEG preprotein conducting channel. Has a central role in coupling the hydrolysis of ATP to the transfer of proteins into and across the cell membrane, serving as an ATP-driven molecular motor driving the stepwise translocation of polypeptide chains across the membrane.</text>
</comment>
<comment type="catalytic activity">
    <reaction evidence="1">
        <text>ATP + H2O + cellular proteinSide 1 = ADP + phosphate + cellular proteinSide 2.</text>
        <dbReference type="EC" id="7.4.2.8"/>
    </reaction>
</comment>
<comment type="subunit">
    <text evidence="1">Monomer and homodimer. Part of the essential Sec protein translocation apparatus which comprises SecA, SecYEG and auxiliary proteins SecDF. Other proteins may also be involved.</text>
</comment>
<comment type="subcellular location">
    <subcellularLocation>
        <location evidence="1">Cell membrane</location>
        <topology evidence="1">Peripheral membrane protein</topology>
        <orientation evidence="1">Cytoplasmic side</orientation>
    </subcellularLocation>
    <subcellularLocation>
        <location evidence="1">Cytoplasm</location>
    </subcellularLocation>
    <text evidence="1">Distribution is 50-50.</text>
</comment>
<comment type="similarity">
    <text evidence="1">Belongs to the SecA family.</text>
</comment>
<feature type="chain" id="PRO_0000318457" description="Protein translocase subunit SecA 2">
    <location>
        <begin position="1"/>
        <end position="793"/>
    </location>
</feature>
<feature type="binding site" evidence="1">
    <location>
        <position position="77"/>
    </location>
    <ligand>
        <name>ATP</name>
        <dbReference type="ChEBI" id="CHEBI:30616"/>
    </ligand>
</feature>
<feature type="binding site" evidence="1">
    <location>
        <begin position="95"/>
        <end position="99"/>
    </location>
    <ligand>
        <name>ATP</name>
        <dbReference type="ChEBI" id="CHEBI:30616"/>
    </ligand>
</feature>
<feature type="binding site" evidence="1">
    <location>
        <position position="493"/>
    </location>
    <ligand>
        <name>ATP</name>
        <dbReference type="ChEBI" id="CHEBI:30616"/>
    </ligand>
</feature>
<dbReference type="EC" id="7.4.2.8" evidence="1"/>
<dbReference type="EMBL" id="CP000387">
    <property type="protein sequence ID" value="ABN44264.1"/>
    <property type="molecule type" value="Genomic_DNA"/>
</dbReference>
<dbReference type="RefSeq" id="WP_011836745.1">
    <property type="nucleotide sequence ID" value="NC_009009.1"/>
</dbReference>
<dbReference type="RefSeq" id="YP_001034814.1">
    <property type="nucleotide sequence ID" value="NC_009009.1"/>
</dbReference>
<dbReference type="SMR" id="A3CM59"/>
<dbReference type="STRING" id="388919.SSA_0836"/>
<dbReference type="KEGG" id="ssa:SSA_0836"/>
<dbReference type="PATRIC" id="fig|388919.9.peg.799"/>
<dbReference type="eggNOG" id="COG0653">
    <property type="taxonomic scope" value="Bacteria"/>
</dbReference>
<dbReference type="HOGENOM" id="CLU_005314_3_2_9"/>
<dbReference type="OrthoDB" id="9762243at2"/>
<dbReference type="Proteomes" id="UP000002148">
    <property type="component" value="Chromosome"/>
</dbReference>
<dbReference type="GO" id="GO:0031522">
    <property type="term" value="C:cell envelope Sec protein transport complex"/>
    <property type="evidence" value="ECO:0007669"/>
    <property type="project" value="TreeGrafter"/>
</dbReference>
<dbReference type="GO" id="GO:0005829">
    <property type="term" value="C:cytosol"/>
    <property type="evidence" value="ECO:0007669"/>
    <property type="project" value="TreeGrafter"/>
</dbReference>
<dbReference type="GO" id="GO:0005886">
    <property type="term" value="C:plasma membrane"/>
    <property type="evidence" value="ECO:0007669"/>
    <property type="project" value="UniProtKB-SubCell"/>
</dbReference>
<dbReference type="GO" id="GO:0005524">
    <property type="term" value="F:ATP binding"/>
    <property type="evidence" value="ECO:0007669"/>
    <property type="project" value="UniProtKB-UniRule"/>
</dbReference>
<dbReference type="GO" id="GO:0008564">
    <property type="term" value="F:protein-exporting ATPase activity"/>
    <property type="evidence" value="ECO:0007669"/>
    <property type="project" value="UniProtKB-EC"/>
</dbReference>
<dbReference type="GO" id="GO:0065002">
    <property type="term" value="P:intracellular protein transmembrane transport"/>
    <property type="evidence" value="ECO:0007669"/>
    <property type="project" value="UniProtKB-UniRule"/>
</dbReference>
<dbReference type="GO" id="GO:0017038">
    <property type="term" value="P:protein import"/>
    <property type="evidence" value="ECO:0007669"/>
    <property type="project" value="InterPro"/>
</dbReference>
<dbReference type="GO" id="GO:0006605">
    <property type="term" value="P:protein targeting"/>
    <property type="evidence" value="ECO:0007669"/>
    <property type="project" value="UniProtKB-UniRule"/>
</dbReference>
<dbReference type="GO" id="GO:0043952">
    <property type="term" value="P:protein transport by the Sec complex"/>
    <property type="evidence" value="ECO:0007669"/>
    <property type="project" value="TreeGrafter"/>
</dbReference>
<dbReference type="CDD" id="cd17928">
    <property type="entry name" value="DEXDc_SecA"/>
    <property type="match status" value="1"/>
</dbReference>
<dbReference type="CDD" id="cd18803">
    <property type="entry name" value="SF2_C_secA"/>
    <property type="match status" value="1"/>
</dbReference>
<dbReference type="FunFam" id="3.40.50.300:FF:000429">
    <property type="entry name" value="Preprotein translocase subunit SecA"/>
    <property type="match status" value="1"/>
</dbReference>
<dbReference type="Gene3D" id="1.10.3060.10">
    <property type="entry name" value="Helical scaffold and wing domains of SecA"/>
    <property type="match status" value="1"/>
</dbReference>
<dbReference type="Gene3D" id="3.40.50.300">
    <property type="entry name" value="P-loop containing nucleotide triphosphate hydrolases"/>
    <property type="match status" value="2"/>
</dbReference>
<dbReference type="Gene3D" id="3.90.1440.10">
    <property type="entry name" value="SecA, preprotein cross-linking domain"/>
    <property type="match status" value="1"/>
</dbReference>
<dbReference type="HAMAP" id="MF_01382">
    <property type="entry name" value="SecA"/>
    <property type="match status" value="1"/>
</dbReference>
<dbReference type="InterPro" id="IPR014001">
    <property type="entry name" value="Helicase_ATP-bd"/>
</dbReference>
<dbReference type="InterPro" id="IPR001650">
    <property type="entry name" value="Helicase_C-like"/>
</dbReference>
<dbReference type="InterPro" id="IPR027417">
    <property type="entry name" value="P-loop_NTPase"/>
</dbReference>
<dbReference type="InterPro" id="IPR000185">
    <property type="entry name" value="SecA"/>
</dbReference>
<dbReference type="InterPro" id="IPR022490">
    <property type="entry name" value="SecA2"/>
</dbReference>
<dbReference type="InterPro" id="IPR011115">
    <property type="entry name" value="SecA_DEAD"/>
</dbReference>
<dbReference type="InterPro" id="IPR014018">
    <property type="entry name" value="SecA_motor_DEAD"/>
</dbReference>
<dbReference type="InterPro" id="IPR011130">
    <property type="entry name" value="SecA_preprotein_X-link_dom"/>
</dbReference>
<dbReference type="InterPro" id="IPR044722">
    <property type="entry name" value="SecA_SF2_C"/>
</dbReference>
<dbReference type="InterPro" id="IPR011116">
    <property type="entry name" value="SecA_Wing/Scaffold"/>
</dbReference>
<dbReference type="InterPro" id="IPR036266">
    <property type="entry name" value="SecA_Wing/Scaffold_sf"/>
</dbReference>
<dbReference type="InterPro" id="IPR036670">
    <property type="entry name" value="SecA_X-link_sf"/>
</dbReference>
<dbReference type="NCBIfam" id="NF006630">
    <property type="entry name" value="PRK09200.1"/>
    <property type="match status" value="1"/>
</dbReference>
<dbReference type="NCBIfam" id="TIGR03714">
    <property type="entry name" value="secA2"/>
    <property type="match status" value="1"/>
</dbReference>
<dbReference type="PANTHER" id="PTHR30612:SF0">
    <property type="entry name" value="CHLOROPLAST PROTEIN-TRANSPORTING ATPASE"/>
    <property type="match status" value="1"/>
</dbReference>
<dbReference type="PANTHER" id="PTHR30612">
    <property type="entry name" value="SECA INNER MEMBRANE COMPONENT OF SEC PROTEIN SECRETION SYSTEM"/>
    <property type="match status" value="1"/>
</dbReference>
<dbReference type="Pfam" id="PF21090">
    <property type="entry name" value="P-loop_SecA"/>
    <property type="match status" value="2"/>
</dbReference>
<dbReference type="Pfam" id="PF07517">
    <property type="entry name" value="SecA_DEAD"/>
    <property type="match status" value="1"/>
</dbReference>
<dbReference type="Pfam" id="PF01043">
    <property type="entry name" value="SecA_PP_bind"/>
    <property type="match status" value="1"/>
</dbReference>
<dbReference type="Pfam" id="PF07516">
    <property type="entry name" value="SecA_SW"/>
    <property type="match status" value="1"/>
</dbReference>
<dbReference type="PRINTS" id="PR00906">
    <property type="entry name" value="SECA"/>
</dbReference>
<dbReference type="SMART" id="SM00957">
    <property type="entry name" value="SecA_DEAD"/>
    <property type="match status" value="1"/>
</dbReference>
<dbReference type="SMART" id="SM00958">
    <property type="entry name" value="SecA_PP_bind"/>
    <property type="match status" value="1"/>
</dbReference>
<dbReference type="SUPFAM" id="SSF81886">
    <property type="entry name" value="Helical scaffold and wing domains of SecA"/>
    <property type="match status" value="1"/>
</dbReference>
<dbReference type="SUPFAM" id="SSF52540">
    <property type="entry name" value="P-loop containing nucleoside triphosphate hydrolases"/>
    <property type="match status" value="2"/>
</dbReference>
<dbReference type="SUPFAM" id="SSF81767">
    <property type="entry name" value="Pre-protein crosslinking domain of SecA"/>
    <property type="match status" value="1"/>
</dbReference>
<dbReference type="PROSITE" id="PS51196">
    <property type="entry name" value="SECA_MOTOR_DEAD"/>
    <property type="match status" value="1"/>
</dbReference>
<protein>
    <recommendedName>
        <fullName evidence="1">Protein translocase subunit SecA 2</fullName>
        <ecNumber evidence="1">7.4.2.8</ecNumber>
    </recommendedName>
</protein>
<gene>
    <name evidence="1" type="primary">secA2</name>
    <name type="ordered locus">SSA_0836</name>
</gene>